<gene>
    <name type="primary">MAPRE1</name>
</gene>
<dbReference type="EMBL" id="AY704913">
    <property type="protein sequence ID" value="AAU12573.1"/>
    <property type="molecule type" value="mRNA"/>
</dbReference>
<dbReference type="RefSeq" id="NP_001310145.1">
    <property type="nucleotide sequence ID" value="NM_001323216.1"/>
</dbReference>
<dbReference type="SMR" id="Q66T82"/>
<dbReference type="GeneID" id="107323220"/>
<dbReference type="KEGG" id="cjo:107323220"/>
<dbReference type="CTD" id="22919"/>
<dbReference type="OrthoDB" id="2119228at2759"/>
<dbReference type="Proteomes" id="UP000694412">
    <property type="component" value="Unplaced"/>
</dbReference>
<dbReference type="GO" id="GO:0005813">
    <property type="term" value="C:centrosome"/>
    <property type="evidence" value="ECO:0007669"/>
    <property type="project" value="UniProtKB-SubCell"/>
</dbReference>
<dbReference type="GO" id="GO:0030981">
    <property type="term" value="C:cortical microtubule cytoskeleton"/>
    <property type="evidence" value="ECO:0000250"/>
    <property type="project" value="UniProtKB"/>
</dbReference>
<dbReference type="GO" id="GO:0005794">
    <property type="term" value="C:Golgi apparatus"/>
    <property type="evidence" value="ECO:0007669"/>
    <property type="project" value="UniProtKB-SubCell"/>
</dbReference>
<dbReference type="GO" id="GO:0005874">
    <property type="term" value="C:microtubule"/>
    <property type="evidence" value="ECO:0000250"/>
    <property type="project" value="UniProtKB"/>
</dbReference>
<dbReference type="GO" id="GO:0097431">
    <property type="term" value="C:mitotic spindle pole"/>
    <property type="evidence" value="ECO:0000250"/>
    <property type="project" value="UniProtKB"/>
</dbReference>
<dbReference type="GO" id="GO:0051010">
    <property type="term" value="F:microtubule plus-end binding"/>
    <property type="evidence" value="ECO:0000250"/>
    <property type="project" value="UniProtKB"/>
</dbReference>
<dbReference type="GO" id="GO:0051315">
    <property type="term" value="P:attachment of mitotic spindle microtubules to kinetochore"/>
    <property type="evidence" value="ECO:0000250"/>
    <property type="project" value="UniProtKB"/>
</dbReference>
<dbReference type="GO" id="GO:0051301">
    <property type="term" value="P:cell division"/>
    <property type="evidence" value="ECO:0007669"/>
    <property type="project" value="UniProtKB-KW"/>
</dbReference>
<dbReference type="GO" id="GO:0000132">
    <property type="term" value="P:establishment of mitotic spindle orientation"/>
    <property type="evidence" value="ECO:0000250"/>
    <property type="project" value="UniProtKB"/>
</dbReference>
<dbReference type="GO" id="GO:0031115">
    <property type="term" value="P:negative regulation of microtubule polymerization"/>
    <property type="evidence" value="ECO:0000250"/>
    <property type="project" value="UniProtKB"/>
</dbReference>
<dbReference type="GO" id="GO:1902888">
    <property type="term" value="P:protein localization to astral microtubule"/>
    <property type="evidence" value="ECO:0000250"/>
    <property type="project" value="UniProtKB"/>
</dbReference>
<dbReference type="GO" id="GO:0035372">
    <property type="term" value="P:protein localization to microtubule"/>
    <property type="evidence" value="ECO:0000250"/>
    <property type="project" value="UniProtKB"/>
</dbReference>
<dbReference type="FunFam" id="1.20.5.1430:FF:000001">
    <property type="entry name" value="microtubule-associated protein RP/EB family member 1"/>
    <property type="match status" value="1"/>
</dbReference>
<dbReference type="FunFam" id="1.10.418.10:FF:000007">
    <property type="entry name" value="Microtubule-associated protein, RP/EB family, member 2"/>
    <property type="match status" value="1"/>
</dbReference>
<dbReference type="Gene3D" id="1.20.5.1430">
    <property type="match status" value="1"/>
</dbReference>
<dbReference type="Gene3D" id="1.10.418.10">
    <property type="entry name" value="Calponin-like domain"/>
    <property type="match status" value="1"/>
</dbReference>
<dbReference type="InterPro" id="IPR001715">
    <property type="entry name" value="CH_dom"/>
</dbReference>
<dbReference type="InterPro" id="IPR036872">
    <property type="entry name" value="CH_dom_sf"/>
</dbReference>
<dbReference type="InterPro" id="IPR004953">
    <property type="entry name" value="EB1_C"/>
</dbReference>
<dbReference type="InterPro" id="IPR036133">
    <property type="entry name" value="EB1_C_sf"/>
</dbReference>
<dbReference type="InterPro" id="IPR027328">
    <property type="entry name" value="MAPRE"/>
</dbReference>
<dbReference type="PANTHER" id="PTHR10623">
    <property type="entry name" value="MICROTUBULE-ASSOCIATED PROTEIN RP/EB FAMILY MEMBER"/>
    <property type="match status" value="1"/>
</dbReference>
<dbReference type="Pfam" id="PF00307">
    <property type="entry name" value="CH"/>
    <property type="match status" value="1"/>
</dbReference>
<dbReference type="Pfam" id="PF03271">
    <property type="entry name" value="EB1"/>
    <property type="match status" value="1"/>
</dbReference>
<dbReference type="SUPFAM" id="SSF47576">
    <property type="entry name" value="Calponin-homology domain, CH-domain"/>
    <property type="match status" value="1"/>
</dbReference>
<dbReference type="SUPFAM" id="SSF140612">
    <property type="entry name" value="EB1 dimerisation domain-like"/>
    <property type="match status" value="1"/>
</dbReference>
<dbReference type="PROSITE" id="PS50021">
    <property type="entry name" value="CH"/>
    <property type="match status" value="1"/>
</dbReference>
<dbReference type="PROSITE" id="PS51230">
    <property type="entry name" value="EB1_C"/>
    <property type="match status" value="1"/>
</dbReference>
<feature type="chain" id="PRO_0000213423" description="Microtubule-associated protein RP/EB family member 1">
    <location>
        <begin position="1"/>
        <end position="263"/>
    </location>
</feature>
<feature type="domain" description="Calponin-homology (CH)" evidence="2">
    <location>
        <begin position="14"/>
        <end position="116"/>
    </location>
</feature>
<feature type="domain" description="EB1 C-terminal" evidence="3">
    <location>
        <begin position="180"/>
        <end position="250"/>
    </location>
</feature>
<feature type="region of interest" description="Disordered" evidence="4">
    <location>
        <begin position="150"/>
        <end position="182"/>
    </location>
</feature>
<name>MARE1_COTJA</name>
<comment type="function">
    <text evidence="1">Plus-end tracking protein (+TIP) that binds to the plus-end of microtubules and regulates the dynamics of the microtubule cytoskeleton. Promotes cytoplasmic microtubule nucleation and elongation. Involved in mitotic spindle positioning by stabilizing microtubules and promoting dynamic connection between astral microtubules and the cortex during mitotic chromosome segregation.</text>
</comment>
<comment type="subcellular location">
    <subcellularLocation>
        <location evidence="1">Cytoplasm</location>
        <location evidence="1">Cytoskeleton</location>
    </subcellularLocation>
    <subcellularLocation>
        <location evidence="1">Cytoplasm</location>
        <location evidence="1">Cytoskeleton</location>
        <location evidence="1">Microtubule organizing center</location>
        <location evidence="1">Centrosome</location>
    </subcellularLocation>
    <subcellularLocation>
        <location evidence="1">Golgi apparatus</location>
    </subcellularLocation>
    <subcellularLocation>
        <location evidence="1">Cytoplasm</location>
        <location evidence="1">Cytoskeleton</location>
        <location evidence="1">Spindle</location>
    </subcellularLocation>
    <subcellularLocation>
        <location evidence="1">Cytoplasm</location>
        <location evidence="1">Cytoskeleton</location>
        <location evidence="1">Spindle pole</location>
    </subcellularLocation>
</comment>
<comment type="similarity">
    <text evidence="5">Belongs to the MAPRE family.</text>
</comment>
<keyword id="KW-0131">Cell cycle</keyword>
<keyword id="KW-0132">Cell division</keyword>
<keyword id="KW-0963">Cytoplasm</keyword>
<keyword id="KW-0206">Cytoskeleton</keyword>
<keyword id="KW-0333">Golgi apparatus</keyword>
<keyword id="KW-0493">Microtubule</keyword>
<keyword id="KW-0498">Mitosis</keyword>
<keyword id="KW-1185">Reference proteome</keyword>
<proteinExistence type="evidence at transcript level"/>
<accession>Q66T82</accession>
<sequence length="263" mass="29505">MAVNVYSTSVTSDNLSRHDMLAWINESLQLTLTKIEQLCSGAAYCQFMDMLFPGSVALKKVKFQAKLEHEYIQNFKVLQAGFKRMGVDKIIPVDKLVKGKFQDNFEFVQWFKKFFDANYDGKEYDPVAARQGQETVAPNLVAPVMNKPKKPLGTGSAGPQRPIVAQRTPATPKGGTGMVKKAAGDDESAGLIEQINVLKLTVEDLEKERDFYFGKLRNIELICQENEGENDPVLQRIVEILYATDEGFVIPDEGAPQEEQEEY</sequence>
<evidence type="ECO:0000250" key="1">
    <source>
        <dbReference type="UniProtKB" id="Q15691"/>
    </source>
</evidence>
<evidence type="ECO:0000255" key="2">
    <source>
        <dbReference type="PROSITE-ProRule" id="PRU00044"/>
    </source>
</evidence>
<evidence type="ECO:0000255" key="3">
    <source>
        <dbReference type="PROSITE-ProRule" id="PRU00576"/>
    </source>
</evidence>
<evidence type="ECO:0000256" key="4">
    <source>
        <dbReference type="SAM" id="MobiDB-lite"/>
    </source>
</evidence>
<evidence type="ECO:0000305" key="5"/>
<protein>
    <recommendedName>
        <fullName>Microtubule-associated protein RP/EB family member 1</fullName>
    </recommendedName>
</protein>
<reference key="1">
    <citation type="submission" date="2004-08" db="EMBL/GenBank/DDBJ databases">
        <title>Functional characterization of the EB1 C-terminal domain.</title>
        <authorList>
            <person name="Matt T."/>
            <person name="Bister K."/>
        </authorList>
    </citation>
    <scope>NUCLEOTIDE SEQUENCE [MRNA]</scope>
</reference>
<organism>
    <name type="scientific">Coturnix japonica</name>
    <name type="common">Japanese quail</name>
    <name type="synonym">Coturnix coturnix japonica</name>
    <dbReference type="NCBI Taxonomy" id="93934"/>
    <lineage>
        <taxon>Eukaryota</taxon>
        <taxon>Metazoa</taxon>
        <taxon>Chordata</taxon>
        <taxon>Craniata</taxon>
        <taxon>Vertebrata</taxon>
        <taxon>Euteleostomi</taxon>
        <taxon>Archelosauria</taxon>
        <taxon>Archosauria</taxon>
        <taxon>Dinosauria</taxon>
        <taxon>Saurischia</taxon>
        <taxon>Theropoda</taxon>
        <taxon>Coelurosauria</taxon>
        <taxon>Aves</taxon>
        <taxon>Neognathae</taxon>
        <taxon>Galloanserae</taxon>
        <taxon>Galliformes</taxon>
        <taxon>Phasianidae</taxon>
        <taxon>Perdicinae</taxon>
        <taxon>Coturnix</taxon>
    </lineage>
</organism>